<dbReference type="EMBL" id="AP006627">
    <property type="protein sequence ID" value="BAD62697.1"/>
    <property type="molecule type" value="Genomic_DNA"/>
</dbReference>
<dbReference type="RefSeq" id="WP_011245018.1">
    <property type="nucleotide sequence ID" value="NC_006582.1"/>
</dbReference>
<dbReference type="SMR" id="Q5WLQ8"/>
<dbReference type="STRING" id="66692.ABC0154"/>
<dbReference type="KEGG" id="bcl:ABC0154"/>
<dbReference type="eggNOG" id="COG0185">
    <property type="taxonomic scope" value="Bacteria"/>
</dbReference>
<dbReference type="HOGENOM" id="CLU_144911_0_1_9"/>
<dbReference type="OrthoDB" id="9797833at2"/>
<dbReference type="Proteomes" id="UP000001168">
    <property type="component" value="Chromosome"/>
</dbReference>
<dbReference type="GO" id="GO:0005737">
    <property type="term" value="C:cytoplasm"/>
    <property type="evidence" value="ECO:0007669"/>
    <property type="project" value="UniProtKB-ARBA"/>
</dbReference>
<dbReference type="GO" id="GO:0015935">
    <property type="term" value="C:small ribosomal subunit"/>
    <property type="evidence" value="ECO:0007669"/>
    <property type="project" value="InterPro"/>
</dbReference>
<dbReference type="GO" id="GO:0019843">
    <property type="term" value="F:rRNA binding"/>
    <property type="evidence" value="ECO:0007669"/>
    <property type="project" value="UniProtKB-UniRule"/>
</dbReference>
<dbReference type="GO" id="GO:0003735">
    <property type="term" value="F:structural constituent of ribosome"/>
    <property type="evidence" value="ECO:0007669"/>
    <property type="project" value="InterPro"/>
</dbReference>
<dbReference type="GO" id="GO:0000028">
    <property type="term" value="P:ribosomal small subunit assembly"/>
    <property type="evidence" value="ECO:0007669"/>
    <property type="project" value="TreeGrafter"/>
</dbReference>
<dbReference type="GO" id="GO:0006412">
    <property type="term" value="P:translation"/>
    <property type="evidence" value="ECO:0007669"/>
    <property type="project" value="UniProtKB-UniRule"/>
</dbReference>
<dbReference type="FunFam" id="3.30.860.10:FF:000001">
    <property type="entry name" value="30S ribosomal protein S19"/>
    <property type="match status" value="1"/>
</dbReference>
<dbReference type="Gene3D" id="3.30.860.10">
    <property type="entry name" value="30s Ribosomal Protein S19, Chain A"/>
    <property type="match status" value="1"/>
</dbReference>
<dbReference type="HAMAP" id="MF_00531">
    <property type="entry name" value="Ribosomal_uS19"/>
    <property type="match status" value="1"/>
</dbReference>
<dbReference type="InterPro" id="IPR002222">
    <property type="entry name" value="Ribosomal_uS19"/>
</dbReference>
<dbReference type="InterPro" id="IPR005732">
    <property type="entry name" value="Ribosomal_uS19_bac-type"/>
</dbReference>
<dbReference type="InterPro" id="IPR020934">
    <property type="entry name" value="Ribosomal_uS19_CS"/>
</dbReference>
<dbReference type="InterPro" id="IPR023575">
    <property type="entry name" value="Ribosomal_uS19_SF"/>
</dbReference>
<dbReference type="NCBIfam" id="TIGR01050">
    <property type="entry name" value="rpsS_bact"/>
    <property type="match status" value="1"/>
</dbReference>
<dbReference type="PANTHER" id="PTHR11880">
    <property type="entry name" value="RIBOSOMAL PROTEIN S19P FAMILY MEMBER"/>
    <property type="match status" value="1"/>
</dbReference>
<dbReference type="PANTHER" id="PTHR11880:SF8">
    <property type="entry name" value="SMALL RIBOSOMAL SUBUNIT PROTEIN US19M"/>
    <property type="match status" value="1"/>
</dbReference>
<dbReference type="Pfam" id="PF00203">
    <property type="entry name" value="Ribosomal_S19"/>
    <property type="match status" value="1"/>
</dbReference>
<dbReference type="PIRSF" id="PIRSF002144">
    <property type="entry name" value="Ribosomal_S19"/>
    <property type="match status" value="1"/>
</dbReference>
<dbReference type="PRINTS" id="PR00975">
    <property type="entry name" value="RIBOSOMALS19"/>
</dbReference>
<dbReference type="SUPFAM" id="SSF54570">
    <property type="entry name" value="Ribosomal protein S19"/>
    <property type="match status" value="1"/>
</dbReference>
<dbReference type="PROSITE" id="PS00323">
    <property type="entry name" value="RIBOSOMAL_S19"/>
    <property type="match status" value="1"/>
</dbReference>
<protein>
    <recommendedName>
        <fullName evidence="1">Small ribosomal subunit protein uS19</fullName>
    </recommendedName>
    <alternativeName>
        <fullName evidence="2">30S ribosomal protein S19</fullName>
    </alternativeName>
</protein>
<gene>
    <name evidence="1" type="primary">rpsS</name>
    <name type="ordered locus">ABC0154</name>
</gene>
<proteinExistence type="inferred from homology"/>
<reference key="1">
    <citation type="submission" date="2003-10" db="EMBL/GenBank/DDBJ databases">
        <title>The complete genome sequence of the alkaliphilic Bacillus clausii KSM-K16.</title>
        <authorList>
            <person name="Takaki Y."/>
            <person name="Kageyama Y."/>
            <person name="Shimamura S."/>
            <person name="Suzuki H."/>
            <person name="Nishi S."/>
            <person name="Hatada Y."/>
            <person name="Kawai S."/>
            <person name="Ito S."/>
            <person name="Horikoshi K."/>
        </authorList>
    </citation>
    <scope>NUCLEOTIDE SEQUENCE [LARGE SCALE GENOMIC DNA]</scope>
    <source>
        <strain>KSM-K16</strain>
    </source>
</reference>
<organism>
    <name type="scientific">Shouchella clausii (strain KSM-K16)</name>
    <name type="common">Alkalihalobacillus clausii</name>
    <dbReference type="NCBI Taxonomy" id="66692"/>
    <lineage>
        <taxon>Bacteria</taxon>
        <taxon>Bacillati</taxon>
        <taxon>Bacillota</taxon>
        <taxon>Bacilli</taxon>
        <taxon>Bacillales</taxon>
        <taxon>Bacillaceae</taxon>
        <taxon>Shouchella</taxon>
    </lineage>
</organism>
<feature type="chain" id="PRO_0000129778" description="Small ribosomal subunit protein uS19">
    <location>
        <begin position="1"/>
        <end position="91"/>
    </location>
</feature>
<comment type="function">
    <text evidence="1">Protein S19 forms a complex with S13 that binds strongly to the 16S ribosomal RNA.</text>
</comment>
<comment type="similarity">
    <text evidence="1">Belongs to the universal ribosomal protein uS19 family.</text>
</comment>
<keyword id="KW-1185">Reference proteome</keyword>
<keyword id="KW-0687">Ribonucleoprotein</keyword>
<keyword id="KW-0689">Ribosomal protein</keyword>
<keyword id="KW-0694">RNA-binding</keyword>
<keyword id="KW-0699">rRNA-binding</keyword>
<name>RS19_SHOC1</name>
<sequence length="91" mass="10345">MGRSLKKGPFVDGHLMKKVEALNATNDKKVVKTWSRRSTIFPDFIGHTFAVYDGRKHVPVYVSEDMVGHKLGEFAPTRTYKGHAADKKTRR</sequence>
<evidence type="ECO:0000255" key="1">
    <source>
        <dbReference type="HAMAP-Rule" id="MF_00531"/>
    </source>
</evidence>
<evidence type="ECO:0000305" key="2"/>
<accession>Q5WLQ8</accession>